<accession>Q06263</accession>
<accession>D6VYI5</accession>
<accession>Q07057</accession>
<feature type="chain" id="PRO_0000065933" description="Vacuolar protein sorting-associated protein VTA1">
    <location>
        <begin position="1"/>
        <end position="330"/>
    </location>
</feature>
<feature type="region of interest" description="Interaction with DID2">
    <location>
        <begin position="1"/>
        <end position="167"/>
    </location>
</feature>
<feature type="region of interest" description="Interaction with VSP60" evidence="7">
    <location>
        <begin position="37"/>
        <end position="68"/>
    </location>
</feature>
<feature type="region of interest" description="Disordered" evidence="1">
    <location>
        <begin position="187"/>
        <end position="217"/>
    </location>
</feature>
<feature type="region of interest" description="Disordered" evidence="1">
    <location>
        <begin position="233"/>
        <end position="280"/>
    </location>
</feature>
<feature type="region of interest" description="Dimerization">
    <location>
        <begin position="280"/>
        <end position="330"/>
    </location>
</feature>
<feature type="region of interest" description="Interaction with VSP4">
    <location>
        <begin position="290"/>
        <end position="330"/>
    </location>
</feature>
<feature type="compositionally biased region" description="Basic and acidic residues" evidence="1">
    <location>
        <begin position="190"/>
        <end position="207"/>
    </location>
</feature>
<feature type="compositionally biased region" description="Basic and acidic residues" evidence="1">
    <location>
        <begin position="240"/>
        <end position="262"/>
    </location>
</feature>
<feature type="modified residue" description="Phosphoserine" evidence="15">
    <location>
        <position position="183"/>
    </location>
</feature>
<feature type="modified residue" description="Phosphothreonine" evidence="15">
    <location>
        <position position="195"/>
    </location>
</feature>
<feature type="modified residue" description="Phosphoserine" evidence="14 15">
    <location>
        <position position="233"/>
    </location>
</feature>
<feature type="mutagenesis site" description="Abolishes interaction with VSP60 and DID2." evidence="10">
    <original>W</original>
    <variation>A</variation>
    <location>
        <position position="122"/>
    </location>
</feature>
<feature type="mutagenesis site" description="Abolishes interaction with VSP60 and DID2." evidence="10">
    <original>K</original>
    <variation>A</variation>
    <location>
        <position position="152"/>
    </location>
</feature>
<feature type="mutagenesis site" description="Abolishes interaction with VSP4." evidence="7">
    <original>K</original>
    <variation>A</variation>
    <location>
        <position position="299"/>
    </location>
</feature>
<feature type="mutagenesis site" description="Abolishes interaction with VSP4." evidence="7">
    <original>K</original>
    <variation>A</variation>
    <location>
        <position position="302"/>
    </location>
</feature>
<feature type="mutagenesis site" description="Abolishes interaction with VSP4, no effect on dimerization." evidence="10">
    <original>Y</original>
    <variation>A</variation>
    <location>
        <position position="303"/>
    </location>
</feature>
<feature type="mutagenesis site" description="Diminishes interaction with VSP4." evidence="7">
    <original>S</original>
    <variation>A</variation>
    <location>
        <position position="306"/>
    </location>
</feature>
<feature type="mutagenesis site" description="Abolishes interaction with VSP4, no effect on dimerization." evidence="10">
    <original>Y</original>
    <variation>A</variation>
    <location>
        <position position="310"/>
    </location>
</feature>
<feature type="mutagenesis site" description="Abolishes interaction with VSP4 and dimerization." evidence="10">
    <original>E</original>
    <variation>A</variation>
    <location>
        <position position="311"/>
    </location>
</feature>
<feature type="mutagenesis site" description="Abolishes interaction with VSP4 and dimerization." evidence="10">
    <original>D</original>
    <variation>A</variation>
    <location>
        <position position="312"/>
    </location>
</feature>
<feature type="mutagenesis site" description="Abolishes dimerization." evidence="10">
    <original>L</original>
    <variation>E</variation>
    <location>
        <position position="320"/>
    </location>
</feature>
<feature type="mutagenesis site" description="No effect on interaction with VSP4." evidence="7">
    <original>K</original>
    <variation>A</variation>
    <location>
        <position position="322"/>
    </location>
</feature>
<feature type="mutagenesis site" description="Abolishes dimerization." evidence="10">
    <original>L</original>
    <variation>E</variation>
    <location>
        <position position="327"/>
    </location>
</feature>
<feature type="sequence conflict" description="In Ref. 1; AAA66933." evidence="13" ref="1">
    <original>A</original>
    <variation>G</variation>
    <location>
        <position position="12"/>
    </location>
</feature>
<feature type="helix" evidence="17">
    <location>
        <begin position="1"/>
        <end position="17"/>
    </location>
</feature>
<feature type="helix" evidence="17">
    <location>
        <begin position="21"/>
        <end position="35"/>
    </location>
</feature>
<feature type="helix" evidence="17">
    <location>
        <begin position="43"/>
        <end position="61"/>
    </location>
</feature>
<feature type="turn" evidence="19">
    <location>
        <begin position="62"/>
        <end position="66"/>
    </location>
</feature>
<feature type="helix" evidence="16">
    <location>
        <begin position="68"/>
        <end position="71"/>
    </location>
</feature>
<feature type="turn" evidence="17">
    <location>
        <begin position="77"/>
        <end position="80"/>
    </location>
</feature>
<feature type="helix" evidence="17">
    <location>
        <begin position="81"/>
        <end position="84"/>
    </location>
</feature>
<feature type="helix" evidence="17">
    <location>
        <begin position="86"/>
        <end position="109"/>
    </location>
</feature>
<feature type="helix" evidence="17">
    <location>
        <begin position="115"/>
        <end position="134"/>
    </location>
</feature>
<feature type="helix" evidence="17">
    <location>
        <begin position="136"/>
        <end position="138"/>
    </location>
</feature>
<feature type="helix" evidence="17">
    <location>
        <begin position="141"/>
        <end position="162"/>
    </location>
</feature>
<feature type="helix" evidence="18">
    <location>
        <begin position="280"/>
        <end position="308"/>
    </location>
</feature>
<feature type="turn" evidence="18">
    <location>
        <begin position="309"/>
        <end position="311"/>
    </location>
</feature>
<feature type="helix" evidence="18">
    <location>
        <begin position="313"/>
        <end position="328"/>
    </location>
</feature>
<sequence>MASNAARVVATAKDFDKVGLGIIGYYLQLYAVELILSEEDRSQEMTALATELLDTIEAFKKEIGGESEAEDSDKSLHVMNTLIHDQEKAKIYMLNFTMSLYNEKLKQLKDGPWDVMLKRSLWCCIDLFSCILHLWKENISETSTNSLQKRIKYCKIYLSKLAKGEIGSSDEKTLDYADFADDSEEIKDEDVDHQTSDLENNNNDKVEGLAPKDQTTSYEPVDEVPEFIDDADSVNEEEQTVDKNEDAITKDEQQVVKKEVDLTRPSAPSEPAAAEHKSYTKDELTKIMDRASKIEQIQKLAKYAISALNYEDLPTAKDELTKALDLLNSI</sequence>
<name>VTA1_YEAST</name>
<evidence type="ECO:0000256" key="1">
    <source>
        <dbReference type="SAM" id="MobiDB-lite"/>
    </source>
</evidence>
<evidence type="ECO:0000269" key="2">
    <source>
    </source>
</evidence>
<evidence type="ECO:0000269" key="3">
    <source>
    </source>
</evidence>
<evidence type="ECO:0000269" key="4">
    <source>
    </source>
</evidence>
<evidence type="ECO:0000269" key="5">
    <source>
    </source>
</evidence>
<evidence type="ECO:0000269" key="6">
    <source>
    </source>
</evidence>
<evidence type="ECO:0000269" key="7">
    <source>
    </source>
</evidence>
<evidence type="ECO:0000269" key="8">
    <source>
    </source>
</evidence>
<evidence type="ECO:0000269" key="9">
    <source>
    </source>
</evidence>
<evidence type="ECO:0000269" key="10">
    <source>
    </source>
</evidence>
<evidence type="ECO:0000269" key="11">
    <source>
    </source>
</evidence>
<evidence type="ECO:0000269" key="12">
    <source>
    </source>
</evidence>
<evidence type="ECO:0000305" key="13"/>
<evidence type="ECO:0007744" key="14">
    <source>
    </source>
</evidence>
<evidence type="ECO:0007744" key="15">
    <source>
    </source>
</evidence>
<evidence type="ECO:0007829" key="16">
    <source>
        <dbReference type="PDB" id="2LUH"/>
    </source>
</evidence>
<evidence type="ECO:0007829" key="17">
    <source>
        <dbReference type="PDB" id="2RKK"/>
    </source>
</evidence>
<evidence type="ECO:0007829" key="18">
    <source>
        <dbReference type="PDB" id="2RKL"/>
    </source>
</evidence>
<evidence type="ECO:0007829" key="19">
    <source>
        <dbReference type="PDB" id="5H7P"/>
    </source>
</evidence>
<reference key="1">
    <citation type="journal article" date="1987" name="J. Biol. Chem.">
        <title>SAM1, the structural gene for one of the S-adenosylmethionine synthetases in Saccharomyces cerevisiae. Sequence and expression.</title>
        <authorList>
            <person name="Thomas D."/>
            <person name="Surdin-Kerjan Y."/>
        </authorList>
    </citation>
    <scope>NUCLEOTIDE SEQUENCE [GENOMIC DNA]</scope>
</reference>
<reference key="2">
    <citation type="journal article" date="1997" name="Nature">
        <title>The nucleotide sequence of Saccharomyces cerevisiae chromosome XII.</title>
        <authorList>
            <person name="Johnston M."/>
            <person name="Hillier L.W."/>
            <person name="Riles L."/>
            <person name="Albermann K."/>
            <person name="Andre B."/>
            <person name="Ansorge W."/>
            <person name="Benes V."/>
            <person name="Brueckner M."/>
            <person name="Delius H."/>
            <person name="Dubois E."/>
            <person name="Duesterhoeft A."/>
            <person name="Entian K.-D."/>
            <person name="Floeth M."/>
            <person name="Goffeau A."/>
            <person name="Hebling U."/>
            <person name="Heumann K."/>
            <person name="Heuss-Neitzel D."/>
            <person name="Hilbert H."/>
            <person name="Hilger F."/>
            <person name="Kleine K."/>
            <person name="Koetter P."/>
            <person name="Louis E.J."/>
            <person name="Messenguy F."/>
            <person name="Mewes H.-W."/>
            <person name="Miosga T."/>
            <person name="Moestl D."/>
            <person name="Mueller-Auer S."/>
            <person name="Nentwich U."/>
            <person name="Obermaier B."/>
            <person name="Piravandi E."/>
            <person name="Pohl T.M."/>
            <person name="Portetelle D."/>
            <person name="Purnelle B."/>
            <person name="Rechmann S."/>
            <person name="Rieger M."/>
            <person name="Rinke M."/>
            <person name="Rose M."/>
            <person name="Scharfe M."/>
            <person name="Scherens B."/>
            <person name="Scholler P."/>
            <person name="Schwager C."/>
            <person name="Schwarz S."/>
            <person name="Underwood A.P."/>
            <person name="Urrestarazu L.A."/>
            <person name="Vandenbol M."/>
            <person name="Verhasselt P."/>
            <person name="Vierendeels F."/>
            <person name="Voet M."/>
            <person name="Volckaert G."/>
            <person name="Voss H."/>
            <person name="Wambutt R."/>
            <person name="Wedler E."/>
            <person name="Wedler H."/>
            <person name="Zimmermann F.K."/>
            <person name="Zollner A."/>
            <person name="Hani J."/>
            <person name="Hoheisel J.D."/>
        </authorList>
    </citation>
    <scope>NUCLEOTIDE SEQUENCE [LARGE SCALE GENOMIC DNA]</scope>
    <source>
        <strain>ATCC 204508 / S288c</strain>
    </source>
</reference>
<reference key="3">
    <citation type="journal article" date="2014" name="G3 (Bethesda)">
        <title>The reference genome sequence of Saccharomyces cerevisiae: Then and now.</title>
        <authorList>
            <person name="Engel S.R."/>
            <person name="Dietrich F.S."/>
            <person name="Fisk D.G."/>
            <person name="Binkley G."/>
            <person name="Balakrishnan R."/>
            <person name="Costanzo M.C."/>
            <person name="Dwight S.S."/>
            <person name="Hitz B.C."/>
            <person name="Karra K."/>
            <person name="Nash R.S."/>
            <person name="Weng S."/>
            <person name="Wong E.D."/>
            <person name="Lloyd P."/>
            <person name="Skrzypek M.S."/>
            <person name="Miyasato S.R."/>
            <person name="Simison M."/>
            <person name="Cherry J.M."/>
        </authorList>
    </citation>
    <scope>GENOME REANNOTATION</scope>
    <source>
        <strain>ATCC 204508 / S288c</strain>
    </source>
</reference>
<reference key="4">
    <citation type="journal article" date="2003" name="J. Cell Sci.">
        <title>Vps20p and Vta1p interact with Vps4p and function in multivesicular body sorting and endosomal transport in Saccharomyces cerevisiae.</title>
        <authorList>
            <person name="Yeo S.C.L."/>
            <person name="Xu L."/>
            <person name="Ren J."/>
            <person name="Boulton V.J."/>
            <person name="Wagle M.D."/>
            <person name="Liu C."/>
            <person name="Ren G."/>
            <person name="Wong P."/>
            <person name="Zahn R."/>
            <person name="Sasajala P."/>
            <person name="Yang H."/>
            <person name="Piper R.C."/>
            <person name="Munn A.L."/>
        </authorList>
    </citation>
    <scope>FUNCTION</scope>
    <scope>INTERACTION WITH VPS4</scope>
</reference>
<reference key="5">
    <citation type="journal article" date="2003" name="Nature">
        <title>Global analysis of protein localization in budding yeast.</title>
        <authorList>
            <person name="Huh W.-K."/>
            <person name="Falvo J.V."/>
            <person name="Gerke L.C."/>
            <person name="Carroll A.S."/>
            <person name="Howson R.W."/>
            <person name="Weissman J.S."/>
            <person name="O'Shea E.K."/>
        </authorList>
    </citation>
    <scope>SUBCELLULAR LOCATION [LARGE SCALE ANALYSIS]</scope>
</reference>
<reference key="6">
    <citation type="journal article" date="2003" name="Nature">
        <title>Global analysis of protein expression in yeast.</title>
        <authorList>
            <person name="Ghaemmaghami S."/>
            <person name="Huh W.-K."/>
            <person name="Bower K."/>
            <person name="Howson R.W."/>
            <person name="Belle A."/>
            <person name="Dephoure N."/>
            <person name="O'Shea E.K."/>
            <person name="Weissman J.S."/>
        </authorList>
    </citation>
    <scope>LEVEL OF PROTEIN EXPRESSION [LARGE SCALE ANALYSIS]</scope>
</reference>
<reference key="7">
    <citation type="journal article" date="2004" name="J. Biol. Chem.">
        <title>Characterization of Vta1p, a class E Vps protein in Saccharomyces cerevisiae.</title>
        <authorList>
            <person name="Shiflett S.L."/>
            <person name="Ward D.M."/>
            <person name="Huynh D."/>
            <person name="Vaughn M.B."/>
            <person name="Simmons J.C."/>
            <person name="Kaplan J."/>
        </authorList>
    </citation>
    <scope>FUNCTION</scope>
    <scope>SUBUNIT</scope>
    <scope>INTERACTION WITH VPS60</scope>
    <scope>SUBCELLULAR LOCATION</scope>
</reference>
<reference key="8">
    <citation type="journal article" date="2004" name="Traffic">
        <title>Protein-protein interactions of ESCRT complexes in the yeast Saccharomyces cerevisiae.</title>
        <authorList>
            <person name="Bowers K."/>
            <person name="Lottridge J."/>
            <person name="Helliwell S.B."/>
            <person name="Goldthwaite L.M."/>
            <person name="Luzio J.P."/>
            <person name="Stevens T.H."/>
        </authorList>
    </citation>
    <scope>INTERACTION WITH DID2</scope>
</reference>
<reference key="9">
    <citation type="journal article" date="2006" name="J. Cell Biol.">
        <title>Recycling of ESCRTs by the AAA-ATPase Vps4 is regulated by a conserved VSL region in Vta1.</title>
        <authorList>
            <person name="Azmi I."/>
            <person name="Davies B."/>
            <person name="Dimaano C."/>
            <person name="Payne J."/>
            <person name="Eckert D."/>
            <person name="Babst M."/>
            <person name="Katzmann D.J."/>
        </authorList>
    </citation>
    <scope>FUNCTION</scope>
    <scope>INTERACTION WITH VSP4 AND VSP60</scope>
    <scope>MUTAGENESIS OF LYS-299; LYS-302; SER-306 AND LYS-322</scope>
</reference>
<reference key="10">
    <citation type="journal article" date="2006" name="Proc. Natl. Acad. Sci. U.S.A.">
        <title>Vta1p and Vps46p regulate the membrane association and ATPase activity of Vps4p at the yeast multivesicular body.</title>
        <authorList>
            <person name="Lottridge J.M."/>
            <person name="Flannery A.R."/>
            <person name="Vincelli J.L."/>
            <person name="Stevens T.H."/>
        </authorList>
    </citation>
    <scope>FUNCTION</scope>
    <scope>INTERACTION WITH SNF7 AND DID2</scope>
</reference>
<reference key="11">
    <citation type="journal article" date="2008" name="Dev. Cell">
        <title>ESCRT-III family members stimulate Vps4 ATPase activity directly or via Vta1.</title>
        <authorList>
            <person name="Azmi I.F."/>
            <person name="Davies B.A."/>
            <person name="Xiao J."/>
            <person name="Babst M."/>
            <person name="Xu Z."/>
            <person name="Katzmann D.J."/>
        </authorList>
    </citation>
    <scope>INTERACTION WITH DID2</scope>
</reference>
<reference key="12">
    <citation type="journal article" date="2008" name="J. Mol. Biol.">
        <title>Cryo-EM structure of dodecameric Vps4p and its 2:1 complex with Vta1p.</title>
        <authorList>
            <person name="Yu Z."/>
            <person name="Gonciarz M.D."/>
            <person name="Sundquist W.I."/>
            <person name="Hill C.P."/>
            <person name="Jensen G.J."/>
        </authorList>
    </citation>
    <scope>INTERACTION WITH VSP4</scope>
</reference>
<reference key="13">
    <citation type="journal article" date="2008" name="Mol. Biol. Cell">
        <title>Novel Ist1-Did2 complex functions at a late step in multivesicular body sorting.</title>
        <authorList>
            <person name="Rue S.M."/>
            <person name="Mattei S."/>
            <person name="Saksena S."/>
            <person name="Emr S.D."/>
        </authorList>
    </citation>
    <scope>INTERACTION WITH VPS60</scope>
</reference>
<reference key="14">
    <citation type="journal article" date="2008" name="Mol. Cell. Proteomics">
        <title>A multidimensional chromatography technology for in-depth phosphoproteome analysis.</title>
        <authorList>
            <person name="Albuquerque C.P."/>
            <person name="Smolka M.B."/>
            <person name="Payne S.H."/>
            <person name="Bafna V."/>
            <person name="Eng J."/>
            <person name="Zhou H."/>
        </authorList>
    </citation>
    <scope>PHOSPHORYLATION [LARGE SCALE ANALYSIS] AT SER-233</scope>
    <scope>IDENTIFICATION BY MASS SPECTROMETRY [LARGE SCALE ANALYSIS]</scope>
</reference>
<reference key="15">
    <citation type="journal article" date="2009" name="Science">
        <title>Global analysis of Cdk1 substrate phosphorylation sites provides insights into evolution.</title>
        <authorList>
            <person name="Holt L.J."/>
            <person name="Tuch B.B."/>
            <person name="Villen J."/>
            <person name="Johnson A.D."/>
            <person name="Gygi S.P."/>
            <person name="Morgan D.O."/>
        </authorList>
    </citation>
    <scope>PHOSPHORYLATION [LARGE SCALE ANALYSIS] AT SER-183; THR-195 AND SER-233</scope>
    <scope>IDENTIFICATION BY MASS SPECTROMETRY [LARGE SCALE ANALYSIS]</scope>
</reference>
<reference key="16">
    <citation type="journal article" date="2008" name="Dev. Cell">
        <title>Structural basis of Vta1 function in the multivesicular body sorting pathway.</title>
        <authorList>
            <person name="Xiao J."/>
            <person name="Xia H."/>
            <person name="Zhou J."/>
            <person name="Azmi I.F."/>
            <person name="Davies B.A."/>
            <person name="Katzmann D.J."/>
            <person name="Xu Z."/>
        </authorList>
    </citation>
    <scope>X-RAY CRYSTALLOGRAPHY (2.9 ANGSTROMS) OF 1-167</scope>
    <scope>X-RAY CRYSTALLOGRAPHY (1.5 ANGSTROMS) OF 280-330</scope>
    <scope>INTERACTION WITH VPS60 AND DID2</scope>
    <scope>MUTAGENESIS OF TRP-122; LYS-152; TYR-303; TYR-310; GLU-311; ASP-312; LEU-320 AND LEU-327</scope>
</reference>
<protein>
    <recommendedName>
        <fullName>Vacuolar protein sorting-associated protein VTA1</fullName>
    </recommendedName>
    <alternativeName>
        <fullName>VPS20-associated protein 1</fullName>
    </alternativeName>
</protein>
<dbReference type="EMBL" id="J03477">
    <property type="protein sequence ID" value="AAA66933.1"/>
    <property type="molecule type" value="Genomic_DNA"/>
</dbReference>
<dbReference type="EMBL" id="U17246">
    <property type="protein sequence ID" value="AAB67473.1"/>
    <property type="molecule type" value="Genomic_DNA"/>
</dbReference>
<dbReference type="EMBL" id="BK006945">
    <property type="protein sequence ID" value="DAA09501.1"/>
    <property type="molecule type" value="Genomic_DNA"/>
</dbReference>
<dbReference type="PIR" id="S51426">
    <property type="entry name" value="S51426"/>
</dbReference>
<dbReference type="RefSeq" id="NP_013282.1">
    <property type="nucleotide sequence ID" value="NM_001182068.1"/>
</dbReference>
<dbReference type="PDB" id="2LUH">
    <property type="method" value="NMR"/>
    <property type="chains" value="A=1-167"/>
</dbReference>
<dbReference type="PDB" id="2RKK">
    <property type="method" value="X-ray"/>
    <property type="resolution" value="2.90 A"/>
    <property type="chains" value="A/B=1-167"/>
</dbReference>
<dbReference type="PDB" id="2RKL">
    <property type="method" value="X-ray"/>
    <property type="resolution" value="1.50 A"/>
    <property type="chains" value="A/B/C/D/E/F=280-330"/>
</dbReference>
<dbReference type="PDB" id="3MHV">
    <property type="method" value="X-ray"/>
    <property type="resolution" value="3.10 A"/>
    <property type="chains" value="A=289-330"/>
</dbReference>
<dbReference type="PDB" id="5H7P">
    <property type="method" value="NMR"/>
    <property type="chains" value="A=1-167"/>
</dbReference>
<dbReference type="PDB" id="5UIE">
    <property type="method" value="EM"/>
    <property type="resolution" value="5.70 A"/>
    <property type="chains" value="H/I/J/K/L/M/N/O/P/Q/R/S=1-330"/>
</dbReference>
<dbReference type="PDB" id="5XMK">
    <property type="method" value="EM"/>
    <property type="resolution" value="4.18 A"/>
    <property type="chains" value="G/H/I/J/K/L/M/N=1-330"/>
</dbReference>
<dbReference type="PDB" id="6AP1">
    <property type="method" value="EM"/>
    <property type="resolution" value="3.20 A"/>
    <property type="chains" value="H/I/J/K/L/M/N/O/P/Q/R/S=1-330"/>
</dbReference>
<dbReference type="PDB" id="6OO2">
    <property type="method" value="EM"/>
    <property type="resolution" value="4.40 A"/>
    <property type="chains" value="H/I/J/K/L/M/N/O/P/Q/R/S=280-330"/>
</dbReference>
<dbReference type="PDBsum" id="2LUH"/>
<dbReference type="PDBsum" id="2RKK"/>
<dbReference type="PDBsum" id="2RKL"/>
<dbReference type="PDBsum" id="3MHV"/>
<dbReference type="PDBsum" id="5H7P"/>
<dbReference type="PDBsum" id="5UIE"/>
<dbReference type="PDBsum" id="5XMK"/>
<dbReference type="PDBsum" id="6AP1"/>
<dbReference type="PDBsum" id="6OO2"/>
<dbReference type="BMRB" id="Q06263"/>
<dbReference type="EMDB" id="EMD-20142"/>
<dbReference type="EMDB" id="EMD-6734"/>
<dbReference type="EMDB" id="EMD-6736"/>
<dbReference type="EMDB" id="EMD-8549"/>
<dbReference type="EMDB" id="EMD-8887"/>
<dbReference type="SMR" id="Q06263"/>
<dbReference type="BioGRID" id="31452">
    <property type="interactions" value="113"/>
</dbReference>
<dbReference type="DIP" id="DIP-4802N"/>
<dbReference type="FunCoup" id="Q06263">
    <property type="interactions" value="535"/>
</dbReference>
<dbReference type="IntAct" id="Q06263">
    <property type="interactions" value="9"/>
</dbReference>
<dbReference type="MINT" id="Q06263"/>
<dbReference type="STRING" id="4932.YLR181C"/>
<dbReference type="TCDB" id="3.A.31.1.1">
    <property type="family name" value="the endosomal sorting complexes required for transport iii (escrt-iii) family"/>
</dbReference>
<dbReference type="iPTMnet" id="Q06263"/>
<dbReference type="PaxDb" id="4932-YLR181C"/>
<dbReference type="PeptideAtlas" id="Q06263"/>
<dbReference type="DNASU" id="850878"/>
<dbReference type="EnsemblFungi" id="YLR181C_mRNA">
    <property type="protein sequence ID" value="YLR181C"/>
    <property type="gene ID" value="YLR181C"/>
</dbReference>
<dbReference type="GeneID" id="850878"/>
<dbReference type="KEGG" id="sce:YLR181C"/>
<dbReference type="AGR" id="SGD:S000004171"/>
<dbReference type="SGD" id="S000004171">
    <property type="gene designation" value="VTA1"/>
</dbReference>
<dbReference type="VEuPathDB" id="FungiDB:YLR181C"/>
<dbReference type="eggNOG" id="ENOG502RXP8">
    <property type="taxonomic scope" value="Eukaryota"/>
</dbReference>
<dbReference type="HOGENOM" id="CLU_063501_0_0_1"/>
<dbReference type="InParanoid" id="Q06263"/>
<dbReference type="OMA" id="YCKIYVL"/>
<dbReference type="OrthoDB" id="391137at2759"/>
<dbReference type="BioCyc" id="YEAST:G3O-32305-MONOMER"/>
<dbReference type="Reactome" id="R-SCE-917729">
    <property type="pathway name" value="Endosomal Sorting Complex Required For Transport (ESCRT)"/>
</dbReference>
<dbReference type="BioGRID-ORCS" id="850878">
    <property type="hits" value="2 hits in 10 CRISPR screens"/>
</dbReference>
<dbReference type="EvolutionaryTrace" id="Q06263"/>
<dbReference type="PRO" id="PR:Q06263"/>
<dbReference type="Proteomes" id="UP000002311">
    <property type="component" value="Chromosome XII"/>
</dbReference>
<dbReference type="RNAct" id="Q06263">
    <property type="molecule type" value="protein"/>
</dbReference>
<dbReference type="GO" id="GO:0005768">
    <property type="term" value="C:endosome"/>
    <property type="evidence" value="ECO:0007005"/>
    <property type="project" value="SGD"/>
</dbReference>
<dbReference type="GO" id="GO:1990621">
    <property type="term" value="C:ESCRT IV complex"/>
    <property type="evidence" value="ECO:0000314"/>
    <property type="project" value="FlyBase"/>
</dbReference>
<dbReference type="GO" id="GO:0005771">
    <property type="term" value="C:multivesicular body"/>
    <property type="evidence" value="ECO:0000314"/>
    <property type="project" value="SGD"/>
</dbReference>
<dbReference type="GO" id="GO:0001671">
    <property type="term" value="F:ATPase activator activity"/>
    <property type="evidence" value="ECO:0000314"/>
    <property type="project" value="SGD"/>
</dbReference>
<dbReference type="GO" id="GO:0030674">
    <property type="term" value="F:protein-macromolecule adaptor activity"/>
    <property type="evidence" value="ECO:0000314"/>
    <property type="project" value="SGD"/>
</dbReference>
<dbReference type="GO" id="GO:0045324">
    <property type="term" value="P:late endosome to vacuole transport"/>
    <property type="evidence" value="ECO:0000315"/>
    <property type="project" value="SGD"/>
</dbReference>
<dbReference type="GO" id="GO:0032511">
    <property type="term" value="P:late endosome to vacuole transport via multivesicular body sorting pathway"/>
    <property type="evidence" value="ECO:0000316"/>
    <property type="project" value="SGD"/>
</dbReference>
<dbReference type="GO" id="GO:0006869">
    <property type="term" value="P:lipid transport"/>
    <property type="evidence" value="ECO:0007669"/>
    <property type="project" value="UniProtKB-KW"/>
</dbReference>
<dbReference type="GO" id="GO:0015031">
    <property type="term" value="P:protein transport"/>
    <property type="evidence" value="ECO:0007669"/>
    <property type="project" value="UniProtKB-KW"/>
</dbReference>
<dbReference type="Gene3D" id="1.20.5.420">
    <property type="entry name" value="Immunoglobulin FC, subunit C"/>
    <property type="match status" value="1"/>
</dbReference>
<dbReference type="Gene3D" id="1.25.40.270">
    <property type="entry name" value="Vacuolar protein sorting-associated protein vta1"/>
    <property type="match status" value="1"/>
</dbReference>
<dbReference type="InterPro" id="IPR044538">
    <property type="entry name" value="Vta1-like"/>
</dbReference>
<dbReference type="InterPro" id="IPR039431">
    <property type="entry name" value="Vta1/CALS_N"/>
</dbReference>
<dbReference type="InterPro" id="IPR023175">
    <property type="entry name" value="Vta1/CALS_N_sf"/>
</dbReference>
<dbReference type="InterPro" id="IPR041212">
    <property type="entry name" value="Vta1_C"/>
</dbReference>
<dbReference type="PANTHER" id="PTHR46009">
    <property type="entry name" value="VACUOLAR PROTEIN SORTING-ASSOCIATED PROTEIN VTA1 HOMOLOG"/>
    <property type="match status" value="1"/>
</dbReference>
<dbReference type="PANTHER" id="PTHR46009:SF1">
    <property type="entry name" value="VACUOLAR PROTEIN SORTING-ASSOCIATED PROTEIN VTA1 HOMOLOG"/>
    <property type="match status" value="1"/>
</dbReference>
<dbReference type="Pfam" id="PF04652">
    <property type="entry name" value="Vta1"/>
    <property type="match status" value="1"/>
</dbReference>
<dbReference type="Pfam" id="PF18097">
    <property type="entry name" value="Vta1_C"/>
    <property type="match status" value="1"/>
</dbReference>
<proteinExistence type="evidence at protein level"/>
<organism>
    <name type="scientific">Saccharomyces cerevisiae (strain ATCC 204508 / S288c)</name>
    <name type="common">Baker's yeast</name>
    <dbReference type="NCBI Taxonomy" id="559292"/>
    <lineage>
        <taxon>Eukaryota</taxon>
        <taxon>Fungi</taxon>
        <taxon>Dikarya</taxon>
        <taxon>Ascomycota</taxon>
        <taxon>Saccharomycotina</taxon>
        <taxon>Saccharomycetes</taxon>
        <taxon>Saccharomycetales</taxon>
        <taxon>Saccharomycetaceae</taxon>
        <taxon>Saccharomyces</taxon>
    </lineage>
</organism>
<keyword id="KW-0002">3D-structure</keyword>
<keyword id="KW-0963">Cytoplasm</keyword>
<keyword id="KW-0967">Endosome</keyword>
<keyword id="KW-0445">Lipid transport</keyword>
<keyword id="KW-0472">Membrane</keyword>
<keyword id="KW-0597">Phosphoprotein</keyword>
<keyword id="KW-0653">Protein transport</keyword>
<keyword id="KW-1185">Reference proteome</keyword>
<keyword id="KW-0813">Transport</keyword>
<gene>
    <name type="primary">VTA1</name>
    <name type="ordered locus">YLR181C</name>
</gene>
<comment type="function">
    <text evidence="2 5 7 8">Has a role in the formation of the multivesicular body (MVB). Required for the sorting of lipids to form intralumenal vesicles and for fluid-phase transport to the vacuole. Required for sorting the plasma membrane proteins STE2 and STE3 into the MVB. Acts a cofactor of VSP4, promotes the oligomerization of VPS4 and stimulates its ATPase activity by 6- to 8-fold.</text>
</comment>
<comment type="subunit">
    <text evidence="2 5 6 7 8 9 10 11 12">Homodimer (in cytoplasm). Interacts with VPS4; the interaction requires the dimeric structure of VTA1; 6 homodimers of VTA1 appear to associate with the dodecameric VSP4 complex; the interaction is ADP-dependent. Interacts with SNF7; the interaction requires DID2. Interacts with DID2. Interacts with VPS60; the interaction occurs at he endosomal membrane.</text>
</comment>
<comment type="interaction">
    <interactant intactId="EBI-37098">
        <id>Q06263</id>
    </interactant>
    <interactant intactId="EBI-2053489">
        <id>P69771</id>
        <label>DID2</label>
    </interactant>
    <organismsDiffer>false</organismsDiffer>
    <experiments>3</experiments>
</comment>
<comment type="interaction">
    <interactant intactId="EBI-37098">
        <id>Q06263</id>
    </interactant>
    <interactant intactId="EBI-17554">
        <id>P39929</id>
        <label>SNF7</label>
    </interactant>
    <organismsDiffer>false</organismsDiffer>
    <experiments>2</experiments>
</comment>
<comment type="interaction">
    <interactant intactId="EBI-37098">
        <id>Q06263</id>
    </interactant>
    <interactant intactId="EBI-20475">
        <id>P52917</id>
        <label>VPS4</label>
    </interactant>
    <organismsDiffer>false</organismsDiffer>
    <experiments>12</experiments>
</comment>
<comment type="interaction">
    <interactant intactId="EBI-37098">
        <id>Q06263</id>
    </interactant>
    <interactant intactId="EBI-2090142">
        <id>Q03390</id>
        <label>VPS60</label>
    </interactant>
    <organismsDiffer>false</organismsDiffer>
    <experiments>3</experiments>
</comment>
<comment type="subcellular location">
    <subcellularLocation>
        <location evidence="5">Cytoplasm</location>
    </subcellularLocation>
    <subcellularLocation>
        <location evidence="3">Endosome membrane</location>
        <topology evidence="5">Peripheral membrane protein</topology>
    </subcellularLocation>
</comment>
<comment type="miscellaneous">
    <text evidence="4">Present with 4400 molecules/cell in log phase SD medium.</text>
</comment>
<comment type="similarity">
    <text evidence="13">Belongs to the VTA1 family.</text>
</comment>